<sequence length="339" mass="37390">MSTAVINADDDAMEPTLQSILDQRSLRWIFVGGKGGVGKTTTSCSLAIQLAKVRRSVLLISTDPAHNLSDAFSQKFGKDARKVDGFENLFAMEIDPNGSMQDLLAGQAEGEGAEGLGGMGGMMQDLALSIPGIDEAMSFAEVLKQVKSLSYETIIFDTAPTGHTLRFLQFPSVLEKALKKISQLSSQFGGVLNGLLGANGALPNGQNLGEMMEKLEALRATISEVNQQFKDERLTTFVCVCIPEFLSLYETERMIQELASYQIDTHCIVVNQLLFPKPGSDCEQCTARRRMQKKYLDQIEELYDEFNVVKMPLLVEEVRGKEKLEKFSEMLVKPFVPPS</sequence>
<name>GET3_PODAN</name>
<proteinExistence type="inferred from homology"/>
<evidence type="ECO:0000255" key="1">
    <source>
        <dbReference type="HAMAP-Rule" id="MF_03112"/>
    </source>
</evidence>
<feature type="chain" id="PRO_0000388226" description="ATPase GET3">
    <location>
        <begin position="1"/>
        <end position="339"/>
    </location>
</feature>
<feature type="active site" evidence="1">
    <location>
        <position position="63"/>
    </location>
</feature>
<feature type="binding site" evidence="1">
    <location>
        <begin position="34"/>
        <end position="41"/>
    </location>
    <ligand>
        <name>ATP</name>
        <dbReference type="ChEBI" id="CHEBI:30616"/>
    </ligand>
</feature>
<feature type="binding site" evidence="1">
    <location>
        <position position="244"/>
    </location>
    <ligand>
        <name>ATP</name>
        <dbReference type="ChEBI" id="CHEBI:30616"/>
    </ligand>
</feature>
<feature type="binding site" evidence="1">
    <location>
        <position position="271"/>
    </location>
    <ligand>
        <name>ATP</name>
        <dbReference type="ChEBI" id="CHEBI:30616"/>
    </ligand>
</feature>
<feature type="binding site" evidence="1">
    <location>
        <position position="282"/>
    </location>
    <ligand>
        <name>Zn(2+)</name>
        <dbReference type="ChEBI" id="CHEBI:29105"/>
        <note>ligand shared between dimeric partners</note>
    </ligand>
</feature>
<feature type="binding site" evidence="1">
    <location>
        <position position="285"/>
    </location>
    <ligand>
        <name>Zn(2+)</name>
        <dbReference type="ChEBI" id="CHEBI:29105"/>
        <note>ligand shared between dimeric partners</note>
    </ligand>
</feature>
<dbReference type="EC" id="3.6.-.-" evidence="1"/>
<dbReference type="EMBL" id="CU640366">
    <property type="protein sequence ID" value="CAP73717.1"/>
    <property type="molecule type" value="Genomic_DNA"/>
</dbReference>
<dbReference type="EMBL" id="FO904937">
    <property type="protein sequence ID" value="CDP26118.1"/>
    <property type="molecule type" value="Genomic_DNA"/>
</dbReference>
<dbReference type="RefSeq" id="XP_001911889.1">
    <property type="nucleotide sequence ID" value="XM_001911854.1"/>
</dbReference>
<dbReference type="SMR" id="B2B7D9"/>
<dbReference type="FunCoup" id="B2B7D9">
    <property type="interactions" value="966"/>
</dbReference>
<dbReference type="STRING" id="515849.B2B7D9"/>
<dbReference type="GeneID" id="6195653"/>
<dbReference type="KEGG" id="pan:PODANSg8934"/>
<dbReference type="VEuPathDB" id="FungiDB:PODANS_2_10780"/>
<dbReference type="eggNOG" id="KOG2825">
    <property type="taxonomic scope" value="Eukaryota"/>
</dbReference>
<dbReference type="HOGENOM" id="CLU_040761_0_0_1"/>
<dbReference type="InParanoid" id="B2B7D9"/>
<dbReference type="OrthoDB" id="1770at2759"/>
<dbReference type="Proteomes" id="UP000001197">
    <property type="component" value="Chromosome 2"/>
</dbReference>
<dbReference type="GO" id="GO:0043529">
    <property type="term" value="C:GET complex"/>
    <property type="evidence" value="ECO:0007669"/>
    <property type="project" value="TreeGrafter"/>
</dbReference>
<dbReference type="GO" id="GO:0005524">
    <property type="term" value="F:ATP binding"/>
    <property type="evidence" value="ECO:0007669"/>
    <property type="project" value="UniProtKB-UniRule"/>
</dbReference>
<dbReference type="GO" id="GO:0016887">
    <property type="term" value="F:ATP hydrolysis activity"/>
    <property type="evidence" value="ECO:0007669"/>
    <property type="project" value="InterPro"/>
</dbReference>
<dbReference type="GO" id="GO:0046872">
    <property type="term" value="F:metal ion binding"/>
    <property type="evidence" value="ECO:0007669"/>
    <property type="project" value="UniProtKB-KW"/>
</dbReference>
<dbReference type="GO" id="GO:0071816">
    <property type="term" value="P:tail-anchored membrane protein insertion into ER membrane"/>
    <property type="evidence" value="ECO:0007669"/>
    <property type="project" value="TreeGrafter"/>
</dbReference>
<dbReference type="CDD" id="cd02035">
    <property type="entry name" value="ArsA"/>
    <property type="match status" value="1"/>
</dbReference>
<dbReference type="FunFam" id="3.40.50.300:FF:000235">
    <property type="entry name" value="ATPase ASNA1"/>
    <property type="match status" value="1"/>
</dbReference>
<dbReference type="Gene3D" id="3.40.50.300">
    <property type="entry name" value="P-loop containing nucleotide triphosphate hydrolases"/>
    <property type="match status" value="1"/>
</dbReference>
<dbReference type="HAMAP" id="MF_03112">
    <property type="entry name" value="Asna1_Get3"/>
    <property type="match status" value="1"/>
</dbReference>
<dbReference type="InterPro" id="IPR025723">
    <property type="entry name" value="Anion-transp_ATPase-like_dom"/>
</dbReference>
<dbReference type="InterPro" id="IPR016300">
    <property type="entry name" value="ATPase_ArsA/GET3"/>
</dbReference>
<dbReference type="InterPro" id="IPR027542">
    <property type="entry name" value="ATPase_ArsA/GET3_euk"/>
</dbReference>
<dbReference type="InterPro" id="IPR027417">
    <property type="entry name" value="P-loop_NTPase"/>
</dbReference>
<dbReference type="NCBIfam" id="TIGR00345">
    <property type="entry name" value="GET3_arsA_TRC40"/>
    <property type="match status" value="1"/>
</dbReference>
<dbReference type="PANTHER" id="PTHR10803">
    <property type="entry name" value="ARSENICAL PUMP-DRIVING ATPASE ARSENITE-TRANSLOCATING ATPASE"/>
    <property type="match status" value="1"/>
</dbReference>
<dbReference type="PANTHER" id="PTHR10803:SF3">
    <property type="entry name" value="ATPASE GET3"/>
    <property type="match status" value="1"/>
</dbReference>
<dbReference type="Pfam" id="PF02374">
    <property type="entry name" value="ArsA_ATPase"/>
    <property type="match status" value="1"/>
</dbReference>
<dbReference type="SUPFAM" id="SSF52540">
    <property type="entry name" value="P-loop containing nucleoside triphosphate hydrolases"/>
    <property type="match status" value="1"/>
</dbReference>
<protein>
    <recommendedName>
        <fullName evidence="1">ATPase GET3</fullName>
        <ecNumber evidence="1">3.6.-.-</ecNumber>
    </recommendedName>
    <alternativeName>
        <fullName evidence="1">Arsenical pump-driving ATPase</fullName>
    </alternativeName>
    <alternativeName>
        <fullName evidence="1">Arsenite-stimulated ATPase</fullName>
    </alternativeName>
    <alternativeName>
        <fullName evidence="1">Golgi to ER traffic protein 3</fullName>
    </alternativeName>
    <alternativeName>
        <fullName evidence="1">Guided entry of tail-anchored proteins 3</fullName>
    </alternativeName>
</protein>
<organism>
    <name type="scientific">Podospora anserina (strain S / ATCC MYA-4624 / DSM 980 / FGSC 10383)</name>
    <name type="common">Pleurage anserina</name>
    <dbReference type="NCBI Taxonomy" id="515849"/>
    <lineage>
        <taxon>Eukaryota</taxon>
        <taxon>Fungi</taxon>
        <taxon>Dikarya</taxon>
        <taxon>Ascomycota</taxon>
        <taxon>Pezizomycotina</taxon>
        <taxon>Sordariomycetes</taxon>
        <taxon>Sordariomycetidae</taxon>
        <taxon>Sordariales</taxon>
        <taxon>Podosporaceae</taxon>
        <taxon>Podospora</taxon>
        <taxon>Podospora anserina</taxon>
    </lineage>
</organism>
<reference key="1">
    <citation type="journal article" date="2008" name="Genome Biol.">
        <title>The genome sequence of the model ascomycete fungus Podospora anserina.</title>
        <authorList>
            <person name="Espagne E."/>
            <person name="Lespinet O."/>
            <person name="Malagnac F."/>
            <person name="Da Silva C."/>
            <person name="Jaillon O."/>
            <person name="Porcel B.M."/>
            <person name="Couloux A."/>
            <person name="Aury J.-M."/>
            <person name="Segurens B."/>
            <person name="Poulain J."/>
            <person name="Anthouard V."/>
            <person name="Grossetete S."/>
            <person name="Khalili H."/>
            <person name="Coppin E."/>
            <person name="Dequard-Chablat M."/>
            <person name="Picard M."/>
            <person name="Contamine V."/>
            <person name="Arnaise S."/>
            <person name="Bourdais A."/>
            <person name="Berteaux-Lecellier V."/>
            <person name="Gautheret D."/>
            <person name="de Vries R.P."/>
            <person name="Battaglia E."/>
            <person name="Coutinho P.M."/>
            <person name="Danchin E.G.J."/>
            <person name="Henrissat B."/>
            <person name="El Khoury R."/>
            <person name="Sainsard-Chanet A."/>
            <person name="Boivin A."/>
            <person name="Pinan-Lucarre B."/>
            <person name="Sellem C.H."/>
            <person name="Debuchy R."/>
            <person name="Wincker P."/>
            <person name="Weissenbach J."/>
            <person name="Silar P."/>
        </authorList>
    </citation>
    <scope>NUCLEOTIDE SEQUENCE [LARGE SCALE GENOMIC DNA]</scope>
    <source>
        <strain>S / ATCC MYA-4624 / DSM 980 / FGSC 10383</strain>
    </source>
</reference>
<reference key="2">
    <citation type="journal article" date="2014" name="Genetics">
        <title>Maintaining two mating types: Structure of the mating type locus and its role in heterokaryosis in Podospora anserina.</title>
        <authorList>
            <person name="Grognet P."/>
            <person name="Bidard F."/>
            <person name="Kuchly C."/>
            <person name="Tong L.C.H."/>
            <person name="Coppin E."/>
            <person name="Benkhali J.A."/>
            <person name="Couloux A."/>
            <person name="Wincker P."/>
            <person name="Debuchy R."/>
            <person name="Silar P."/>
        </authorList>
    </citation>
    <scope>GENOME REANNOTATION</scope>
    <source>
        <strain>S / ATCC MYA-4624 / DSM 980 / FGSC 10383</strain>
    </source>
</reference>
<comment type="function">
    <text evidence="1">ATPase required for the post-translational delivery of tail-anchored (TA) proteins to the endoplasmic reticulum. Recognizes and selectively binds the transmembrane domain of TA proteins in the cytosol. This complex then targets to the endoplasmic reticulum by membrane-bound receptors, where the tail-anchored protein is released for insertion. This process is regulated by ATP binding and hydrolysis. ATP binding drives the homodimer towards the closed dimer state, facilitating recognition of newly synthesized TA membrane proteins. ATP hydrolysis is required for insertion. Subsequently, the homodimer reverts towards the open dimer state, lowering its affinity for the membrane-bound receptor, and returning it to the cytosol to initiate a new round of targeting.</text>
</comment>
<comment type="subunit">
    <text evidence="1">Homodimer.</text>
</comment>
<comment type="subcellular location">
    <subcellularLocation>
        <location evidence="1">Cytoplasm</location>
    </subcellularLocation>
    <subcellularLocation>
        <location evidence="1">Endoplasmic reticulum</location>
    </subcellularLocation>
</comment>
<comment type="similarity">
    <text evidence="1">Belongs to the arsA ATPase family.</text>
</comment>
<accession>B2B7D9</accession>
<accession>A0A090D5N5</accession>
<keyword id="KW-0067">ATP-binding</keyword>
<keyword id="KW-0963">Cytoplasm</keyword>
<keyword id="KW-0256">Endoplasmic reticulum</keyword>
<keyword id="KW-0378">Hydrolase</keyword>
<keyword id="KW-0479">Metal-binding</keyword>
<keyword id="KW-0547">Nucleotide-binding</keyword>
<keyword id="KW-1185">Reference proteome</keyword>
<keyword id="KW-0813">Transport</keyword>
<keyword id="KW-0862">Zinc</keyword>
<gene>
    <name evidence="1" type="primary">GET3</name>
    <name type="ordered locus">Pa_2_10780</name>
    <name type="ORF">PODANS_2_10780</name>
</gene>